<feature type="chain" id="PRO_0000339031" description="ATP synthase subunit alpha 1">
    <location>
        <begin position="1"/>
        <end position="509"/>
    </location>
</feature>
<feature type="binding site" evidence="2">
    <location>
        <begin position="172"/>
        <end position="179"/>
    </location>
    <ligand>
        <name>ATP</name>
        <dbReference type="ChEBI" id="CHEBI:30616"/>
    </ligand>
</feature>
<feature type="site" description="Required for activity" evidence="2">
    <location>
        <position position="363"/>
    </location>
</feature>
<organism>
    <name type="scientific">Dinoroseobacter shibae (strain DSM 16493 / NCIMB 14021 / DFL 12)</name>
    <dbReference type="NCBI Taxonomy" id="398580"/>
    <lineage>
        <taxon>Bacteria</taxon>
        <taxon>Pseudomonadati</taxon>
        <taxon>Pseudomonadota</taxon>
        <taxon>Alphaproteobacteria</taxon>
        <taxon>Rhodobacterales</taxon>
        <taxon>Roseobacteraceae</taxon>
        <taxon>Dinoroseobacter</taxon>
    </lineage>
</organism>
<dbReference type="EC" id="7.1.2.2" evidence="2"/>
<dbReference type="EMBL" id="CP000830">
    <property type="protein sequence ID" value="ABV92190.1"/>
    <property type="molecule type" value="Genomic_DNA"/>
</dbReference>
<dbReference type="RefSeq" id="WP_012177120.1">
    <property type="nucleotide sequence ID" value="NC_009952.1"/>
</dbReference>
<dbReference type="SMR" id="A8LN46"/>
<dbReference type="STRING" id="398580.Dshi_0442"/>
<dbReference type="KEGG" id="dsh:Dshi_0442"/>
<dbReference type="eggNOG" id="COG0056">
    <property type="taxonomic scope" value="Bacteria"/>
</dbReference>
<dbReference type="HOGENOM" id="CLU_010091_2_1_5"/>
<dbReference type="OrthoDB" id="9803053at2"/>
<dbReference type="Proteomes" id="UP000006833">
    <property type="component" value="Chromosome"/>
</dbReference>
<dbReference type="GO" id="GO:0005886">
    <property type="term" value="C:plasma membrane"/>
    <property type="evidence" value="ECO:0007669"/>
    <property type="project" value="UniProtKB-SubCell"/>
</dbReference>
<dbReference type="GO" id="GO:0045259">
    <property type="term" value="C:proton-transporting ATP synthase complex"/>
    <property type="evidence" value="ECO:0007669"/>
    <property type="project" value="UniProtKB-KW"/>
</dbReference>
<dbReference type="GO" id="GO:0043531">
    <property type="term" value="F:ADP binding"/>
    <property type="evidence" value="ECO:0007669"/>
    <property type="project" value="TreeGrafter"/>
</dbReference>
<dbReference type="GO" id="GO:0005524">
    <property type="term" value="F:ATP binding"/>
    <property type="evidence" value="ECO:0007669"/>
    <property type="project" value="UniProtKB-UniRule"/>
</dbReference>
<dbReference type="GO" id="GO:0046933">
    <property type="term" value="F:proton-transporting ATP synthase activity, rotational mechanism"/>
    <property type="evidence" value="ECO:0007669"/>
    <property type="project" value="UniProtKB-UniRule"/>
</dbReference>
<dbReference type="CDD" id="cd18113">
    <property type="entry name" value="ATP-synt_F1_alpha_C"/>
    <property type="match status" value="1"/>
</dbReference>
<dbReference type="CDD" id="cd18116">
    <property type="entry name" value="ATP-synt_F1_alpha_N"/>
    <property type="match status" value="1"/>
</dbReference>
<dbReference type="CDD" id="cd01132">
    <property type="entry name" value="F1-ATPase_alpha_CD"/>
    <property type="match status" value="1"/>
</dbReference>
<dbReference type="FunFam" id="3.40.50.300:FF:004039">
    <property type="entry name" value="ATP synthase subunit alpha, mitochondrial"/>
    <property type="match status" value="1"/>
</dbReference>
<dbReference type="Gene3D" id="2.40.30.20">
    <property type="match status" value="1"/>
</dbReference>
<dbReference type="Gene3D" id="1.20.150.20">
    <property type="entry name" value="ATP synthase alpha/beta chain, C-terminal domain"/>
    <property type="match status" value="1"/>
</dbReference>
<dbReference type="Gene3D" id="3.40.50.300">
    <property type="entry name" value="P-loop containing nucleotide triphosphate hydrolases"/>
    <property type="match status" value="1"/>
</dbReference>
<dbReference type="HAMAP" id="MF_01346">
    <property type="entry name" value="ATP_synth_alpha_bact"/>
    <property type="match status" value="1"/>
</dbReference>
<dbReference type="InterPro" id="IPR023366">
    <property type="entry name" value="ATP_synth_asu-like_sf"/>
</dbReference>
<dbReference type="InterPro" id="IPR000793">
    <property type="entry name" value="ATP_synth_asu_C"/>
</dbReference>
<dbReference type="InterPro" id="IPR038376">
    <property type="entry name" value="ATP_synth_asu_C_sf"/>
</dbReference>
<dbReference type="InterPro" id="IPR033732">
    <property type="entry name" value="ATP_synth_F1_a_nt-bd_dom"/>
</dbReference>
<dbReference type="InterPro" id="IPR005294">
    <property type="entry name" value="ATP_synth_F1_asu"/>
</dbReference>
<dbReference type="InterPro" id="IPR004100">
    <property type="entry name" value="ATPase_F1/V1/A1_a/bsu_N"/>
</dbReference>
<dbReference type="InterPro" id="IPR036121">
    <property type="entry name" value="ATPase_F1/V1/A1_a/bsu_N_sf"/>
</dbReference>
<dbReference type="InterPro" id="IPR000194">
    <property type="entry name" value="ATPase_F1/V1/A1_a/bsu_nucl-bd"/>
</dbReference>
<dbReference type="InterPro" id="IPR027417">
    <property type="entry name" value="P-loop_NTPase"/>
</dbReference>
<dbReference type="NCBIfam" id="TIGR00962">
    <property type="entry name" value="atpA"/>
    <property type="match status" value="1"/>
</dbReference>
<dbReference type="NCBIfam" id="NF009884">
    <property type="entry name" value="PRK13343.1"/>
    <property type="match status" value="1"/>
</dbReference>
<dbReference type="PANTHER" id="PTHR48082">
    <property type="entry name" value="ATP SYNTHASE SUBUNIT ALPHA, MITOCHONDRIAL"/>
    <property type="match status" value="1"/>
</dbReference>
<dbReference type="PANTHER" id="PTHR48082:SF2">
    <property type="entry name" value="ATP SYNTHASE SUBUNIT ALPHA, MITOCHONDRIAL"/>
    <property type="match status" value="1"/>
</dbReference>
<dbReference type="Pfam" id="PF00006">
    <property type="entry name" value="ATP-synt_ab"/>
    <property type="match status" value="1"/>
</dbReference>
<dbReference type="Pfam" id="PF00306">
    <property type="entry name" value="ATP-synt_ab_C"/>
    <property type="match status" value="1"/>
</dbReference>
<dbReference type="Pfam" id="PF02874">
    <property type="entry name" value="ATP-synt_ab_N"/>
    <property type="match status" value="1"/>
</dbReference>
<dbReference type="SUPFAM" id="SSF47917">
    <property type="entry name" value="C-terminal domain of alpha and beta subunits of F1 ATP synthase"/>
    <property type="match status" value="1"/>
</dbReference>
<dbReference type="SUPFAM" id="SSF50615">
    <property type="entry name" value="N-terminal domain of alpha and beta subunits of F1 ATP synthase"/>
    <property type="match status" value="1"/>
</dbReference>
<dbReference type="SUPFAM" id="SSF52540">
    <property type="entry name" value="P-loop containing nucleoside triphosphate hydrolases"/>
    <property type="match status" value="1"/>
</dbReference>
<name>ATPA1_DINSH</name>
<proteinExistence type="inferred from homology"/>
<accession>A8LN46</accession>
<keyword id="KW-0066">ATP synthesis</keyword>
<keyword id="KW-0067">ATP-binding</keyword>
<keyword id="KW-0997">Cell inner membrane</keyword>
<keyword id="KW-1003">Cell membrane</keyword>
<keyword id="KW-0139">CF(1)</keyword>
<keyword id="KW-0375">Hydrogen ion transport</keyword>
<keyword id="KW-0406">Ion transport</keyword>
<keyword id="KW-0472">Membrane</keyword>
<keyword id="KW-0547">Nucleotide-binding</keyword>
<keyword id="KW-1185">Reference proteome</keyword>
<keyword id="KW-1278">Translocase</keyword>
<keyword id="KW-0813">Transport</keyword>
<sequence length="509" mass="53220">MRHDTDPRPSTADLIDAVLDAPPPRPEVSEVGRVAELGDGIAIVTGLARALADEVLDFASGVSGIVFDLEPGRLGVVLLGPSQNVAMGEDVRRTGRVVSVPVGPATLGRVVDALGRPRDERDPVTDSPLAPVEAEAPDILSRTPVSRPLATGLKAVDAAVPVGLGQRQLIIGDRQTGKTSIAVDTILNQKDTGVICIYCAIGQRGDAVAKVIGALQGGEMLGQTVVIAAGDEDAPGLAYIAPYAAMSVAESFAAQGRDVLVVLDDLTHHARTYRELSLLLRRPPGREAFPGDIFYVHARLLERAGQFGEGAGSITALPVVETQAENLSAYIPTNLISITDGQIYLSPKLVRTNQFPAVDLGVSVSRVGGKAQARAFRAVGGNLRVTLSQFEELEEFARFGTRLDEDTRARLARGGAVRNALRQAERDPMAAHEQLAVLVAAMEGLLDGMDEAAAGAAMQAIRAAIRAADGGLPEIIAGDEKLTEDARGHILATARAALAQTGRGDGADA</sequence>
<comment type="function">
    <text evidence="2">Produces ATP from ADP in the presence of a proton gradient across the membrane. The alpha chain is a regulatory subunit.</text>
</comment>
<comment type="catalytic activity">
    <reaction evidence="2">
        <text>ATP + H2O + 4 H(+)(in) = ADP + phosphate + 5 H(+)(out)</text>
        <dbReference type="Rhea" id="RHEA:57720"/>
        <dbReference type="ChEBI" id="CHEBI:15377"/>
        <dbReference type="ChEBI" id="CHEBI:15378"/>
        <dbReference type="ChEBI" id="CHEBI:30616"/>
        <dbReference type="ChEBI" id="CHEBI:43474"/>
        <dbReference type="ChEBI" id="CHEBI:456216"/>
        <dbReference type="EC" id="7.1.2.2"/>
    </reaction>
</comment>
<comment type="subunit">
    <text evidence="1">F-type ATPases have 2 components, CF(1) - the catalytic core - and CF(0) - the membrane proton channel. CF(1) has five subunits: alpha(3), beta(3), gamma(1), delta(1), epsilon(1). CF(0) has four main subunits: a(1), b(1), b'(1) and c(9-12) (By similarity).</text>
</comment>
<comment type="subcellular location">
    <subcellularLocation>
        <location evidence="2">Cell inner membrane</location>
        <topology evidence="2">Peripheral membrane protein</topology>
    </subcellularLocation>
</comment>
<comment type="similarity">
    <text evidence="2">Belongs to the ATPase alpha/beta chains family.</text>
</comment>
<evidence type="ECO:0000250" key="1"/>
<evidence type="ECO:0000255" key="2">
    <source>
        <dbReference type="HAMAP-Rule" id="MF_01346"/>
    </source>
</evidence>
<protein>
    <recommendedName>
        <fullName evidence="2">ATP synthase subunit alpha 1</fullName>
        <ecNumber evidence="2">7.1.2.2</ecNumber>
    </recommendedName>
    <alternativeName>
        <fullName evidence="2">ATP synthase F1 sector subunit alpha 1</fullName>
    </alternativeName>
    <alternativeName>
        <fullName evidence="2">F-ATPase subunit alpha 1</fullName>
    </alternativeName>
</protein>
<reference key="1">
    <citation type="journal article" date="2010" name="ISME J.">
        <title>The complete genome sequence of the algal symbiont Dinoroseobacter shibae: a hitchhiker's guide to life in the sea.</title>
        <authorList>
            <person name="Wagner-Dobler I."/>
            <person name="Ballhausen B."/>
            <person name="Berger M."/>
            <person name="Brinkhoff T."/>
            <person name="Buchholz I."/>
            <person name="Bunk B."/>
            <person name="Cypionka H."/>
            <person name="Daniel R."/>
            <person name="Drepper T."/>
            <person name="Gerdts G."/>
            <person name="Hahnke S."/>
            <person name="Han C."/>
            <person name="Jahn D."/>
            <person name="Kalhoefer D."/>
            <person name="Kiss H."/>
            <person name="Klenk H.P."/>
            <person name="Kyrpides N."/>
            <person name="Liebl W."/>
            <person name="Liesegang H."/>
            <person name="Meincke L."/>
            <person name="Pati A."/>
            <person name="Petersen J."/>
            <person name="Piekarski T."/>
            <person name="Pommerenke C."/>
            <person name="Pradella S."/>
            <person name="Pukall R."/>
            <person name="Rabus R."/>
            <person name="Stackebrandt E."/>
            <person name="Thole S."/>
            <person name="Thompson L."/>
            <person name="Tielen P."/>
            <person name="Tomasch J."/>
            <person name="von Jan M."/>
            <person name="Wanphrut N."/>
            <person name="Wichels A."/>
            <person name="Zech H."/>
            <person name="Simon M."/>
        </authorList>
    </citation>
    <scope>NUCLEOTIDE SEQUENCE [LARGE SCALE GENOMIC DNA]</scope>
    <source>
        <strain>DSM 16493 / NCIMB 14021 / DFL 12</strain>
    </source>
</reference>
<gene>
    <name evidence="2" type="primary">atpA1</name>
    <name type="ordered locus">Dshi_0442</name>
</gene>